<name>SYN_STRP2</name>
<dbReference type="EC" id="6.1.1.22" evidence="1"/>
<dbReference type="EMBL" id="CP000410">
    <property type="protein sequence ID" value="ABJ53931.1"/>
    <property type="molecule type" value="Genomic_DNA"/>
</dbReference>
<dbReference type="SMR" id="Q04JK7"/>
<dbReference type="PaxDb" id="373153-SPD_1371"/>
<dbReference type="KEGG" id="spd:SPD_1371"/>
<dbReference type="eggNOG" id="COG0017">
    <property type="taxonomic scope" value="Bacteria"/>
</dbReference>
<dbReference type="HOGENOM" id="CLU_004553_2_0_9"/>
<dbReference type="Proteomes" id="UP000001452">
    <property type="component" value="Chromosome"/>
</dbReference>
<dbReference type="GO" id="GO:0005737">
    <property type="term" value="C:cytoplasm"/>
    <property type="evidence" value="ECO:0007669"/>
    <property type="project" value="UniProtKB-SubCell"/>
</dbReference>
<dbReference type="GO" id="GO:0004816">
    <property type="term" value="F:asparagine-tRNA ligase activity"/>
    <property type="evidence" value="ECO:0007669"/>
    <property type="project" value="UniProtKB-UniRule"/>
</dbReference>
<dbReference type="GO" id="GO:0005524">
    <property type="term" value="F:ATP binding"/>
    <property type="evidence" value="ECO:0007669"/>
    <property type="project" value="UniProtKB-UniRule"/>
</dbReference>
<dbReference type="GO" id="GO:0140096">
    <property type="term" value="F:catalytic activity, acting on a protein"/>
    <property type="evidence" value="ECO:0007669"/>
    <property type="project" value="UniProtKB-ARBA"/>
</dbReference>
<dbReference type="GO" id="GO:0003676">
    <property type="term" value="F:nucleic acid binding"/>
    <property type="evidence" value="ECO:0007669"/>
    <property type="project" value="InterPro"/>
</dbReference>
<dbReference type="GO" id="GO:0016740">
    <property type="term" value="F:transferase activity"/>
    <property type="evidence" value="ECO:0007669"/>
    <property type="project" value="UniProtKB-ARBA"/>
</dbReference>
<dbReference type="GO" id="GO:0006421">
    <property type="term" value="P:asparaginyl-tRNA aminoacylation"/>
    <property type="evidence" value="ECO:0007669"/>
    <property type="project" value="UniProtKB-UniRule"/>
</dbReference>
<dbReference type="CDD" id="cd04323">
    <property type="entry name" value="AsnRS_cyto_like_N"/>
    <property type="match status" value="1"/>
</dbReference>
<dbReference type="CDD" id="cd00776">
    <property type="entry name" value="AsxRS_core"/>
    <property type="match status" value="1"/>
</dbReference>
<dbReference type="Gene3D" id="3.30.930.10">
    <property type="entry name" value="Bira Bifunctional Protein, Domain 2"/>
    <property type="match status" value="1"/>
</dbReference>
<dbReference type="Gene3D" id="2.40.50.140">
    <property type="entry name" value="Nucleic acid-binding proteins"/>
    <property type="match status" value="1"/>
</dbReference>
<dbReference type="HAMAP" id="MF_00534">
    <property type="entry name" value="Asn_tRNA_synth"/>
    <property type="match status" value="1"/>
</dbReference>
<dbReference type="InterPro" id="IPR004364">
    <property type="entry name" value="Aa-tRNA-synt_II"/>
</dbReference>
<dbReference type="InterPro" id="IPR006195">
    <property type="entry name" value="aa-tRNA-synth_II"/>
</dbReference>
<dbReference type="InterPro" id="IPR045864">
    <property type="entry name" value="aa-tRNA-synth_II/BPL/LPL"/>
</dbReference>
<dbReference type="InterPro" id="IPR004522">
    <property type="entry name" value="Asn-tRNA-ligase"/>
</dbReference>
<dbReference type="InterPro" id="IPR002312">
    <property type="entry name" value="Asp/Asn-tRNA-synth_IIb"/>
</dbReference>
<dbReference type="InterPro" id="IPR012340">
    <property type="entry name" value="NA-bd_OB-fold"/>
</dbReference>
<dbReference type="InterPro" id="IPR004365">
    <property type="entry name" value="NA-bd_OB_tRNA"/>
</dbReference>
<dbReference type="NCBIfam" id="TIGR00457">
    <property type="entry name" value="asnS"/>
    <property type="match status" value="1"/>
</dbReference>
<dbReference type="NCBIfam" id="NF003037">
    <property type="entry name" value="PRK03932.1"/>
    <property type="match status" value="1"/>
</dbReference>
<dbReference type="PANTHER" id="PTHR22594:SF34">
    <property type="entry name" value="ASPARAGINE--TRNA LIGASE, MITOCHONDRIAL-RELATED"/>
    <property type="match status" value="1"/>
</dbReference>
<dbReference type="PANTHER" id="PTHR22594">
    <property type="entry name" value="ASPARTYL/LYSYL-TRNA SYNTHETASE"/>
    <property type="match status" value="1"/>
</dbReference>
<dbReference type="Pfam" id="PF00152">
    <property type="entry name" value="tRNA-synt_2"/>
    <property type="match status" value="1"/>
</dbReference>
<dbReference type="Pfam" id="PF01336">
    <property type="entry name" value="tRNA_anti-codon"/>
    <property type="match status" value="1"/>
</dbReference>
<dbReference type="PRINTS" id="PR01042">
    <property type="entry name" value="TRNASYNTHASP"/>
</dbReference>
<dbReference type="SUPFAM" id="SSF55681">
    <property type="entry name" value="Class II aaRS and biotin synthetases"/>
    <property type="match status" value="1"/>
</dbReference>
<dbReference type="SUPFAM" id="SSF50249">
    <property type="entry name" value="Nucleic acid-binding proteins"/>
    <property type="match status" value="1"/>
</dbReference>
<dbReference type="PROSITE" id="PS50862">
    <property type="entry name" value="AA_TRNA_LIGASE_II"/>
    <property type="match status" value="1"/>
</dbReference>
<reference key="1">
    <citation type="journal article" date="2007" name="J. Bacteriol.">
        <title>Genome sequence of Avery's virulent serotype 2 strain D39 of Streptococcus pneumoniae and comparison with that of unencapsulated laboratory strain R6.</title>
        <authorList>
            <person name="Lanie J.A."/>
            <person name="Ng W.-L."/>
            <person name="Kazmierczak K.M."/>
            <person name="Andrzejewski T.M."/>
            <person name="Davidsen T.M."/>
            <person name="Wayne K.J."/>
            <person name="Tettelin H."/>
            <person name="Glass J.I."/>
            <person name="Winkler M.E."/>
        </authorList>
    </citation>
    <scope>NUCLEOTIDE SEQUENCE [LARGE SCALE GENOMIC DNA]</scope>
    <source>
        <strain>D39 / NCTC 7466</strain>
    </source>
</reference>
<protein>
    <recommendedName>
        <fullName evidence="1">Asparagine--tRNA ligase</fullName>
        <ecNumber evidence="1">6.1.1.22</ecNumber>
    </recommendedName>
    <alternativeName>
        <fullName evidence="1">Asparaginyl-tRNA synthetase</fullName>
        <shortName evidence="1">AsnRS</shortName>
    </alternativeName>
</protein>
<organism>
    <name type="scientific">Streptococcus pneumoniae serotype 2 (strain D39 / NCTC 7466)</name>
    <dbReference type="NCBI Taxonomy" id="373153"/>
    <lineage>
        <taxon>Bacteria</taxon>
        <taxon>Bacillati</taxon>
        <taxon>Bacillota</taxon>
        <taxon>Bacilli</taxon>
        <taxon>Lactobacillales</taxon>
        <taxon>Streptococcaceae</taxon>
        <taxon>Streptococcus</taxon>
    </lineage>
</organism>
<comment type="catalytic activity">
    <reaction evidence="1">
        <text>tRNA(Asn) + L-asparagine + ATP = L-asparaginyl-tRNA(Asn) + AMP + diphosphate + H(+)</text>
        <dbReference type="Rhea" id="RHEA:11180"/>
        <dbReference type="Rhea" id="RHEA-COMP:9659"/>
        <dbReference type="Rhea" id="RHEA-COMP:9674"/>
        <dbReference type="ChEBI" id="CHEBI:15378"/>
        <dbReference type="ChEBI" id="CHEBI:30616"/>
        <dbReference type="ChEBI" id="CHEBI:33019"/>
        <dbReference type="ChEBI" id="CHEBI:58048"/>
        <dbReference type="ChEBI" id="CHEBI:78442"/>
        <dbReference type="ChEBI" id="CHEBI:78515"/>
        <dbReference type="ChEBI" id="CHEBI:456215"/>
        <dbReference type="EC" id="6.1.1.22"/>
    </reaction>
</comment>
<comment type="subunit">
    <text evidence="1">Homodimer.</text>
</comment>
<comment type="subcellular location">
    <subcellularLocation>
        <location evidence="1">Cytoplasm</location>
    </subcellularLocation>
</comment>
<comment type="similarity">
    <text evidence="1">Belongs to the class-II aminoacyl-tRNA synthetase family.</text>
</comment>
<feature type="chain" id="PRO_1000051441" description="Asparagine--tRNA ligase">
    <location>
        <begin position="1"/>
        <end position="447"/>
    </location>
</feature>
<sequence length="447" mass="51095">MTKRVTIIDVKDYVGQEVTIGAWVANKSGKGKIAFLQLRDGTAFFQGVAFKPNFVEKFGEEVGLEKFDVIKRLSQETSVYVTGIVKEDERSKFGYELDITDIEVIGESQDYPITPKEHGTDFLMDNRHLWLRSRKQVAVLQIRNAIIYVTYEFFDKNGFMKFDSPILSGNAAEDSTELFETDYFGTPAYLSQSGQLYLEAGAMALGRVFDFGPVFRAEKSKTRRHLTEFWMMDAEYSYLTHDESLDLQEAYVKALLQGVLDRAPQALETLERDTELLKRYIAEPFKRITYDQAIDLLQEHENDEDADYEHLEHGDDFGSPHETWISNHFGVPTFVMNYPAAIKAFYMKPVPGNPERVLCADLLAPEGYGEIIGGSMREEDYDALVAKMDELGMDRTEYEFYLDLRKYGTVPHGGFGIGIERMVTFAAGTKHIREAIPFPRMLHRIKP</sequence>
<evidence type="ECO:0000255" key="1">
    <source>
        <dbReference type="HAMAP-Rule" id="MF_00534"/>
    </source>
</evidence>
<gene>
    <name evidence="1" type="primary">asnS</name>
    <name type="ordered locus">SPD_1371</name>
</gene>
<keyword id="KW-0030">Aminoacyl-tRNA synthetase</keyword>
<keyword id="KW-0067">ATP-binding</keyword>
<keyword id="KW-0963">Cytoplasm</keyword>
<keyword id="KW-0436">Ligase</keyword>
<keyword id="KW-0547">Nucleotide-binding</keyword>
<keyword id="KW-0648">Protein biosynthesis</keyword>
<keyword id="KW-1185">Reference proteome</keyword>
<proteinExistence type="inferred from homology"/>
<accession>Q04JK7</accession>